<dbReference type="EC" id="1.5.1.5" evidence="1"/>
<dbReference type="EC" id="3.5.4.9" evidence="1"/>
<dbReference type="EMBL" id="CP000931">
    <property type="protein sequence ID" value="ABZ77323.1"/>
    <property type="molecule type" value="Genomic_DNA"/>
</dbReference>
<dbReference type="RefSeq" id="WP_012277851.1">
    <property type="nucleotide sequence ID" value="NC_010334.1"/>
</dbReference>
<dbReference type="SMR" id="B0TLV1"/>
<dbReference type="STRING" id="458817.Shal_2770"/>
<dbReference type="KEGG" id="shl:Shal_2770"/>
<dbReference type="eggNOG" id="COG0190">
    <property type="taxonomic scope" value="Bacteria"/>
</dbReference>
<dbReference type="HOGENOM" id="CLU_034045_2_1_6"/>
<dbReference type="OrthoDB" id="9803580at2"/>
<dbReference type="UniPathway" id="UPA00193"/>
<dbReference type="Proteomes" id="UP000001317">
    <property type="component" value="Chromosome"/>
</dbReference>
<dbReference type="GO" id="GO:0005829">
    <property type="term" value="C:cytosol"/>
    <property type="evidence" value="ECO:0007669"/>
    <property type="project" value="TreeGrafter"/>
</dbReference>
<dbReference type="GO" id="GO:0004477">
    <property type="term" value="F:methenyltetrahydrofolate cyclohydrolase activity"/>
    <property type="evidence" value="ECO:0007669"/>
    <property type="project" value="UniProtKB-UniRule"/>
</dbReference>
<dbReference type="GO" id="GO:0004488">
    <property type="term" value="F:methylenetetrahydrofolate dehydrogenase (NADP+) activity"/>
    <property type="evidence" value="ECO:0007669"/>
    <property type="project" value="UniProtKB-UniRule"/>
</dbReference>
<dbReference type="GO" id="GO:0000105">
    <property type="term" value="P:L-histidine biosynthetic process"/>
    <property type="evidence" value="ECO:0007669"/>
    <property type="project" value="UniProtKB-KW"/>
</dbReference>
<dbReference type="GO" id="GO:0009086">
    <property type="term" value="P:methionine biosynthetic process"/>
    <property type="evidence" value="ECO:0007669"/>
    <property type="project" value="UniProtKB-KW"/>
</dbReference>
<dbReference type="GO" id="GO:0006164">
    <property type="term" value="P:purine nucleotide biosynthetic process"/>
    <property type="evidence" value="ECO:0007669"/>
    <property type="project" value="UniProtKB-KW"/>
</dbReference>
<dbReference type="GO" id="GO:0035999">
    <property type="term" value="P:tetrahydrofolate interconversion"/>
    <property type="evidence" value="ECO:0007669"/>
    <property type="project" value="UniProtKB-UniRule"/>
</dbReference>
<dbReference type="CDD" id="cd01080">
    <property type="entry name" value="NAD_bind_m-THF_DH_Cyclohyd"/>
    <property type="match status" value="1"/>
</dbReference>
<dbReference type="FunFam" id="3.40.50.10860:FF:000001">
    <property type="entry name" value="Bifunctional protein FolD"/>
    <property type="match status" value="1"/>
</dbReference>
<dbReference type="FunFam" id="3.40.50.720:FF:000006">
    <property type="entry name" value="Bifunctional protein FolD"/>
    <property type="match status" value="1"/>
</dbReference>
<dbReference type="Gene3D" id="3.40.50.10860">
    <property type="entry name" value="Leucine Dehydrogenase, chain A, domain 1"/>
    <property type="match status" value="1"/>
</dbReference>
<dbReference type="Gene3D" id="3.40.50.720">
    <property type="entry name" value="NAD(P)-binding Rossmann-like Domain"/>
    <property type="match status" value="1"/>
</dbReference>
<dbReference type="HAMAP" id="MF_01576">
    <property type="entry name" value="THF_DHG_CYH"/>
    <property type="match status" value="1"/>
</dbReference>
<dbReference type="InterPro" id="IPR046346">
    <property type="entry name" value="Aminoacid_DH-like_N_sf"/>
</dbReference>
<dbReference type="InterPro" id="IPR036291">
    <property type="entry name" value="NAD(P)-bd_dom_sf"/>
</dbReference>
<dbReference type="InterPro" id="IPR000672">
    <property type="entry name" value="THF_DH/CycHdrlase"/>
</dbReference>
<dbReference type="InterPro" id="IPR020630">
    <property type="entry name" value="THF_DH/CycHdrlase_cat_dom"/>
</dbReference>
<dbReference type="InterPro" id="IPR020867">
    <property type="entry name" value="THF_DH/CycHdrlase_CS"/>
</dbReference>
<dbReference type="InterPro" id="IPR020631">
    <property type="entry name" value="THF_DH/CycHdrlase_NAD-bd_dom"/>
</dbReference>
<dbReference type="NCBIfam" id="NF008058">
    <property type="entry name" value="PRK10792.1"/>
    <property type="match status" value="1"/>
</dbReference>
<dbReference type="NCBIfam" id="NF010783">
    <property type="entry name" value="PRK14186.1"/>
    <property type="match status" value="1"/>
</dbReference>
<dbReference type="PANTHER" id="PTHR48099:SF5">
    <property type="entry name" value="C-1-TETRAHYDROFOLATE SYNTHASE, CYTOPLASMIC"/>
    <property type="match status" value="1"/>
</dbReference>
<dbReference type="PANTHER" id="PTHR48099">
    <property type="entry name" value="C-1-TETRAHYDROFOLATE SYNTHASE, CYTOPLASMIC-RELATED"/>
    <property type="match status" value="1"/>
</dbReference>
<dbReference type="Pfam" id="PF00763">
    <property type="entry name" value="THF_DHG_CYH"/>
    <property type="match status" value="1"/>
</dbReference>
<dbReference type="Pfam" id="PF02882">
    <property type="entry name" value="THF_DHG_CYH_C"/>
    <property type="match status" value="1"/>
</dbReference>
<dbReference type="PRINTS" id="PR00085">
    <property type="entry name" value="THFDHDRGNASE"/>
</dbReference>
<dbReference type="SUPFAM" id="SSF53223">
    <property type="entry name" value="Aminoacid dehydrogenase-like, N-terminal domain"/>
    <property type="match status" value="1"/>
</dbReference>
<dbReference type="SUPFAM" id="SSF51735">
    <property type="entry name" value="NAD(P)-binding Rossmann-fold domains"/>
    <property type="match status" value="1"/>
</dbReference>
<dbReference type="PROSITE" id="PS00767">
    <property type="entry name" value="THF_DHG_CYH_2"/>
    <property type="match status" value="1"/>
</dbReference>
<accession>B0TLV1</accession>
<protein>
    <recommendedName>
        <fullName evidence="1">Bifunctional protein FolD</fullName>
    </recommendedName>
    <domain>
        <recommendedName>
            <fullName evidence="1">Methylenetetrahydrofolate dehydrogenase</fullName>
            <ecNumber evidence="1">1.5.1.5</ecNumber>
        </recommendedName>
    </domain>
    <domain>
        <recommendedName>
            <fullName evidence="1">Methenyltetrahydrofolate cyclohydrolase</fullName>
            <ecNumber evidence="1">3.5.4.9</ecNumber>
        </recommendedName>
    </domain>
</protein>
<evidence type="ECO:0000255" key="1">
    <source>
        <dbReference type="HAMAP-Rule" id="MF_01576"/>
    </source>
</evidence>
<name>FOLD_SHEHH</name>
<proteinExistence type="inferred from homology"/>
<organism>
    <name type="scientific">Shewanella halifaxensis (strain HAW-EB4)</name>
    <dbReference type="NCBI Taxonomy" id="458817"/>
    <lineage>
        <taxon>Bacteria</taxon>
        <taxon>Pseudomonadati</taxon>
        <taxon>Pseudomonadota</taxon>
        <taxon>Gammaproteobacteria</taxon>
        <taxon>Alteromonadales</taxon>
        <taxon>Shewanellaceae</taxon>
        <taxon>Shewanella</taxon>
    </lineage>
</organism>
<feature type="chain" id="PRO_1000087918" description="Bifunctional protein FolD">
    <location>
        <begin position="1"/>
        <end position="284"/>
    </location>
</feature>
<feature type="binding site" evidence="1">
    <location>
        <begin position="166"/>
        <end position="168"/>
    </location>
    <ligand>
        <name>NADP(+)</name>
        <dbReference type="ChEBI" id="CHEBI:58349"/>
    </ligand>
</feature>
<feature type="binding site" evidence="1">
    <location>
        <position position="232"/>
    </location>
    <ligand>
        <name>NADP(+)</name>
        <dbReference type="ChEBI" id="CHEBI:58349"/>
    </ligand>
</feature>
<comment type="function">
    <text evidence="1">Catalyzes the oxidation of 5,10-methylenetetrahydrofolate to 5,10-methenyltetrahydrofolate and then the hydrolysis of 5,10-methenyltetrahydrofolate to 10-formyltetrahydrofolate.</text>
</comment>
<comment type="catalytic activity">
    <reaction evidence="1">
        <text>(6R)-5,10-methylene-5,6,7,8-tetrahydrofolate + NADP(+) = (6R)-5,10-methenyltetrahydrofolate + NADPH</text>
        <dbReference type="Rhea" id="RHEA:22812"/>
        <dbReference type="ChEBI" id="CHEBI:15636"/>
        <dbReference type="ChEBI" id="CHEBI:57455"/>
        <dbReference type="ChEBI" id="CHEBI:57783"/>
        <dbReference type="ChEBI" id="CHEBI:58349"/>
        <dbReference type="EC" id="1.5.1.5"/>
    </reaction>
</comment>
<comment type="catalytic activity">
    <reaction evidence="1">
        <text>(6R)-5,10-methenyltetrahydrofolate + H2O = (6R)-10-formyltetrahydrofolate + H(+)</text>
        <dbReference type="Rhea" id="RHEA:23700"/>
        <dbReference type="ChEBI" id="CHEBI:15377"/>
        <dbReference type="ChEBI" id="CHEBI:15378"/>
        <dbReference type="ChEBI" id="CHEBI:57455"/>
        <dbReference type="ChEBI" id="CHEBI:195366"/>
        <dbReference type="EC" id="3.5.4.9"/>
    </reaction>
</comment>
<comment type="pathway">
    <text evidence="1">One-carbon metabolism; tetrahydrofolate interconversion.</text>
</comment>
<comment type="subunit">
    <text evidence="1">Homodimer.</text>
</comment>
<comment type="similarity">
    <text evidence="1">Belongs to the tetrahydrofolate dehydrogenase/cyclohydrolase family.</text>
</comment>
<gene>
    <name evidence="1" type="primary">folD</name>
    <name type="ordered locus">Shal_2770</name>
</gene>
<sequence>MTAQIIDGKAIAQTIRTQLKDKVTARKEAGQRAPGLAVILVGADPASQVYVGSKRRACEEVGFISRSYDLDSSTSEEALLSLIDECNEDPSIDGILVQLPLPEHIEESKVIERIRPDKDVDGFHPYNVGRLAQRIPVLRACTPMGIMTLIKSTGVDTFGLDAVVIGASNIVGRPMALELLLTGCTTTICHRFTRNLEDKVRQADLLVVAVGKPGFIPGDWIKPGAIVIDVGINRLEGGQLVGDVQFDDAAQHASFITPVPGGVGPMTIASLLENTLYACEQYHD</sequence>
<keyword id="KW-0028">Amino-acid biosynthesis</keyword>
<keyword id="KW-0368">Histidine biosynthesis</keyword>
<keyword id="KW-0378">Hydrolase</keyword>
<keyword id="KW-0486">Methionine biosynthesis</keyword>
<keyword id="KW-0511">Multifunctional enzyme</keyword>
<keyword id="KW-0521">NADP</keyword>
<keyword id="KW-0554">One-carbon metabolism</keyword>
<keyword id="KW-0560">Oxidoreductase</keyword>
<keyword id="KW-0658">Purine biosynthesis</keyword>
<reference key="1">
    <citation type="submission" date="2008-01" db="EMBL/GenBank/DDBJ databases">
        <title>Complete sequence of Shewanella halifaxensis HAW-EB4.</title>
        <authorList>
            <consortium name="US DOE Joint Genome Institute"/>
            <person name="Copeland A."/>
            <person name="Lucas S."/>
            <person name="Lapidus A."/>
            <person name="Glavina del Rio T."/>
            <person name="Dalin E."/>
            <person name="Tice H."/>
            <person name="Bruce D."/>
            <person name="Goodwin L."/>
            <person name="Pitluck S."/>
            <person name="Sims D."/>
            <person name="Brettin T."/>
            <person name="Detter J.C."/>
            <person name="Han C."/>
            <person name="Kuske C.R."/>
            <person name="Schmutz J."/>
            <person name="Larimer F."/>
            <person name="Land M."/>
            <person name="Hauser L."/>
            <person name="Kyrpides N."/>
            <person name="Kim E."/>
            <person name="Zhao J.-S."/>
            <person name="Richardson P."/>
        </authorList>
    </citation>
    <scope>NUCLEOTIDE SEQUENCE [LARGE SCALE GENOMIC DNA]</scope>
    <source>
        <strain>HAW-EB4</strain>
    </source>
</reference>